<protein>
    <recommendedName>
        <fullName evidence="1">Large ribosomal subunit protein bL17</fullName>
    </recommendedName>
    <alternativeName>
        <fullName evidence="2">50S ribosomal protein L17</fullName>
    </alternativeName>
</protein>
<gene>
    <name evidence="1" type="primary">rplQ</name>
    <name type="ordered locus">Sbal195_0225</name>
</gene>
<name>RL17_SHEB9</name>
<keyword id="KW-0687">Ribonucleoprotein</keyword>
<keyword id="KW-0689">Ribosomal protein</keyword>
<comment type="subunit">
    <text evidence="1">Part of the 50S ribosomal subunit. Contacts protein L32.</text>
</comment>
<comment type="similarity">
    <text evidence="1">Belongs to the bacterial ribosomal protein bL17 family.</text>
</comment>
<accession>A9KWC7</accession>
<evidence type="ECO:0000255" key="1">
    <source>
        <dbReference type="HAMAP-Rule" id="MF_01368"/>
    </source>
</evidence>
<evidence type="ECO:0000305" key="2"/>
<organism>
    <name type="scientific">Shewanella baltica (strain OS195)</name>
    <dbReference type="NCBI Taxonomy" id="399599"/>
    <lineage>
        <taxon>Bacteria</taxon>
        <taxon>Pseudomonadati</taxon>
        <taxon>Pseudomonadota</taxon>
        <taxon>Gammaproteobacteria</taxon>
        <taxon>Alteromonadales</taxon>
        <taxon>Shewanellaceae</taxon>
        <taxon>Shewanella</taxon>
    </lineage>
</organism>
<feature type="chain" id="PRO_1000087192" description="Large ribosomal subunit protein bL17">
    <location>
        <begin position="1"/>
        <end position="131"/>
    </location>
</feature>
<sequence length="131" mass="14684">MRHRKSGRQLNRNSSHRQAMFRNMAGSLVRHEIIKTTVAKAKELRRVVEPLITLAKSDSVANRRLAFARTRDAEVVGKLFTELGPRYQERPGGYTRILKCGLRAGDKAPMAYIELVGRPEAAQAVDVEAAE</sequence>
<reference key="1">
    <citation type="submission" date="2007-11" db="EMBL/GenBank/DDBJ databases">
        <title>Complete sequence of chromosome of Shewanella baltica OS195.</title>
        <authorList>
            <consortium name="US DOE Joint Genome Institute"/>
            <person name="Copeland A."/>
            <person name="Lucas S."/>
            <person name="Lapidus A."/>
            <person name="Barry K."/>
            <person name="Glavina del Rio T."/>
            <person name="Dalin E."/>
            <person name="Tice H."/>
            <person name="Pitluck S."/>
            <person name="Chain P."/>
            <person name="Malfatti S."/>
            <person name="Shin M."/>
            <person name="Vergez L."/>
            <person name="Schmutz J."/>
            <person name="Larimer F."/>
            <person name="Land M."/>
            <person name="Hauser L."/>
            <person name="Kyrpides N."/>
            <person name="Kim E."/>
            <person name="Brettar I."/>
            <person name="Rodrigues J."/>
            <person name="Konstantinidis K."/>
            <person name="Klappenbach J."/>
            <person name="Hofle M."/>
            <person name="Tiedje J."/>
            <person name="Richardson P."/>
        </authorList>
    </citation>
    <scope>NUCLEOTIDE SEQUENCE [LARGE SCALE GENOMIC DNA]</scope>
    <source>
        <strain>OS195</strain>
    </source>
</reference>
<proteinExistence type="inferred from homology"/>
<dbReference type="EMBL" id="CP000891">
    <property type="protein sequence ID" value="ABX47407.1"/>
    <property type="molecule type" value="Genomic_DNA"/>
</dbReference>
<dbReference type="RefSeq" id="WP_006083573.1">
    <property type="nucleotide sequence ID" value="NC_009997.1"/>
</dbReference>
<dbReference type="SMR" id="A9KWC7"/>
<dbReference type="GeneID" id="11770581"/>
<dbReference type="KEGG" id="sbn:Sbal195_0225"/>
<dbReference type="HOGENOM" id="CLU_074407_2_0_6"/>
<dbReference type="Proteomes" id="UP000000770">
    <property type="component" value="Chromosome"/>
</dbReference>
<dbReference type="GO" id="GO:0022625">
    <property type="term" value="C:cytosolic large ribosomal subunit"/>
    <property type="evidence" value="ECO:0007669"/>
    <property type="project" value="TreeGrafter"/>
</dbReference>
<dbReference type="GO" id="GO:0003735">
    <property type="term" value="F:structural constituent of ribosome"/>
    <property type="evidence" value="ECO:0007669"/>
    <property type="project" value="InterPro"/>
</dbReference>
<dbReference type="GO" id="GO:0006412">
    <property type="term" value="P:translation"/>
    <property type="evidence" value="ECO:0007669"/>
    <property type="project" value="UniProtKB-UniRule"/>
</dbReference>
<dbReference type="FunFam" id="3.90.1030.10:FF:000001">
    <property type="entry name" value="50S ribosomal protein L17"/>
    <property type="match status" value="1"/>
</dbReference>
<dbReference type="Gene3D" id="3.90.1030.10">
    <property type="entry name" value="Ribosomal protein L17"/>
    <property type="match status" value="1"/>
</dbReference>
<dbReference type="HAMAP" id="MF_01368">
    <property type="entry name" value="Ribosomal_bL17"/>
    <property type="match status" value="1"/>
</dbReference>
<dbReference type="InterPro" id="IPR000456">
    <property type="entry name" value="Ribosomal_bL17"/>
</dbReference>
<dbReference type="InterPro" id="IPR047859">
    <property type="entry name" value="Ribosomal_bL17_CS"/>
</dbReference>
<dbReference type="InterPro" id="IPR036373">
    <property type="entry name" value="Ribosomal_bL17_sf"/>
</dbReference>
<dbReference type="NCBIfam" id="TIGR00059">
    <property type="entry name" value="L17"/>
    <property type="match status" value="1"/>
</dbReference>
<dbReference type="PANTHER" id="PTHR14413:SF16">
    <property type="entry name" value="LARGE RIBOSOMAL SUBUNIT PROTEIN BL17M"/>
    <property type="match status" value="1"/>
</dbReference>
<dbReference type="PANTHER" id="PTHR14413">
    <property type="entry name" value="RIBOSOMAL PROTEIN L17"/>
    <property type="match status" value="1"/>
</dbReference>
<dbReference type="Pfam" id="PF01196">
    <property type="entry name" value="Ribosomal_L17"/>
    <property type="match status" value="1"/>
</dbReference>
<dbReference type="SUPFAM" id="SSF64263">
    <property type="entry name" value="Prokaryotic ribosomal protein L17"/>
    <property type="match status" value="1"/>
</dbReference>
<dbReference type="PROSITE" id="PS01167">
    <property type="entry name" value="RIBOSOMAL_L17"/>
    <property type="match status" value="1"/>
</dbReference>